<gene>
    <name evidence="7" type="primary">TRXM2</name>
    <name evidence="9" type="ordered locus">At4g03520</name>
    <name evidence="10" type="ORF">F9H3.15</name>
    <name evidence="11" type="ORF">T5L23.1</name>
</gene>
<protein>
    <recommendedName>
        <fullName evidence="8">Thioredoxin M2, chloroplastic</fullName>
        <shortName evidence="7">AtTrxm2</shortName>
    </recommendedName>
</protein>
<proteinExistence type="evidence at protein level"/>
<evidence type="ECO:0000250" key="1"/>
<evidence type="ECO:0000255" key="2"/>
<evidence type="ECO:0000255" key="3">
    <source>
        <dbReference type="PROSITE-ProRule" id="PRU00691"/>
    </source>
</evidence>
<evidence type="ECO:0000269" key="4">
    <source>
    </source>
</evidence>
<evidence type="ECO:0000269" key="5">
    <source>
    </source>
</evidence>
<evidence type="ECO:0000269" key="6">
    <source>
    </source>
</evidence>
<evidence type="ECO:0000303" key="7">
    <source>
    </source>
</evidence>
<evidence type="ECO:0000305" key="8"/>
<evidence type="ECO:0000312" key="9">
    <source>
        <dbReference type="Araport" id="AT4G03520"/>
    </source>
</evidence>
<evidence type="ECO:0000312" key="10">
    <source>
        <dbReference type="EMBL" id="AAD11594.1"/>
    </source>
</evidence>
<evidence type="ECO:0000312" key="11">
    <source>
        <dbReference type="EMBL" id="AAD15308.1"/>
    </source>
</evidence>
<evidence type="ECO:0007829" key="12">
    <source>
        <dbReference type="PDB" id="7C3F"/>
    </source>
</evidence>
<accession>Q9SEU8</accession>
<accession>Q56YG4</accession>
<accession>Q8LG26</accession>
<accession>Q9ZT79</accession>
<sequence length="186" mass="20312">MAAFTCTSRPPISLRSETRIVSSSPSASSLSSRRMFAVLPESSGLRIRLSLSPASLTSIHQPRVSRLRRAVVCEAQETTTDIQVVNDSTWDSLVLKATGPVVVDFWAPWCGPCKMIDPLVNDLAQHYTGKIKFYKLNTDESPNTPGQYGVRSIPTIMIFVGGEKKDTIIGAVPKTTLTSSLDKFLP</sequence>
<name>TRXM2_ARATH</name>
<organism>
    <name type="scientific">Arabidopsis thaliana</name>
    <name type="common">Mouse-ear cress</name>
    <dbReference type="NCBI Taxonomy" id="3702"/>
    <lineage>
        <taxon>Eukaryota</taxon>
        <taxon>Viridiplantae</taxon>
        <taxon>Streptophyta</taxon>
        <taxon>Embryophyta</taxon>
        <taxon>Tracheophyta</taxon>
        <taxon>Spermatophyta</taxon>
        <taxon>Magnoliopsida</taxon>
        <taxon>eudicotyledons</taxon>
        <taxon>Gunneridae</taxon>
        <taxon>Pentapetalae</taxon>
        <taxon>rosids</taxon>
        <taxon>malvids</taxon>
        <taxon>Brassicales</taxon>
        <taxon>Brassicaceae</taxon>
        <taxon>Camelineae</taxon>
        <taxon>Arabidopsis</taxon>
    </lineage>
</organism>
<dbReference type="EMBL" id="AF095750">
    <property type="protein sequence ID" value="AAF15949.1"/>
    <property type="molecule type" value="mRNA"/>
</dbReference>
<dbReference type="EMBL" id="AC005142">
    <property type="protein sequence ID" value="AAD15308.1"/>
    <property type="molecule type" value="Genomic_DNA"/>
</dbReference>
<dbReference type="EMBL" id="AF071527">
    <property type="protein sequence ID" value="AAD11594.1"/>
    <property type="molecule type" value="Genomic_DNA"/>
</dbReference>
<dbReference type="EMBL" id="AL161497">
    <property type="protein sequence ID" value="CAB77837.1"/>
    <property type="molecule type" value="Genomic_DNA"/>
</dbReference>
<dbReference type="EMBL" id="CP002687">
    <property type="protein sequence ID" value="AEE82333.1"/>
    <property type="molecule type" value="Genomic_DNA"/>
</dbReference>
<dbReference type="EMBL" id="AY046001">
    <property type="protein sequence ID" value="AAK76675.1"/>
    <property type="molecule type" value="mRNA"/>
</dbReference>
<dbReference type="EMBL" id="AY079362">
    <property type="protein sequence ID" value="AAL85093.1"/>
    <property type="molecule type" value="mRNA"/>
</dbReference>
<dbReference type="EMBL" id="AK221358">
    <property type="protein sequence ID" value="BAD94225.1"/>
    <property type="molecule type" value="mRNA"/>
</dbReference>
<dbReference type="EMBL" id="AY084496">
    <property type="protein sequence ID" value="AAM67285.1"/>
    <property type="molecule type" value="mRNA"/>
</dbReference>
<dbReference type="PIR" id="F85044">
    <property type="entry name" value="F85044"/>
</dbReference>
<dbReference type="RefSeq" id="NP_192261.1">
    <molecule id="Q9SEU8-1"/>
    <property type="nucleotide sequence ID" value="NM_116590.4"/>
</dbReference>
<dbReference type="PDB" id="7C3F">
    <property type="method" value="X-ray"/>
    <property type="resolution" value="2.40 A"/>
    <property type="chains" value="C/F/I/L/O/R/U/W=73-186"/>
</dbReference>
<dbReference type="PDBsum" id="7C3F"/>
<dbReference type="SMR" id="Q9SEU8"/>
<dbReference type="BioGRID" id="10967">
    <property type="interactions" value="4"/>
</dbReference>
<dbReference type="FunCoup" id="Q9SEU8">
    <property type="interactions" value="947"/>
</dbReference>
<dbReference type="IntAct" id="Q9SEU8">
    <property type="interactions" value="2"/>
</dbReference>
<dbReference type="MINT" id="Q9SEU8"/>
<dbReference type="STRING" id="3702.Q9SEU8"/>
<dbReference type="iPTMnet" id="Q9SEU8"/>
<dbReference type="MetOSite" id="Q9SEU8"/>
<dbReference type="PaxDb" id="3702-AT4G03520.1"/>
<dbReference type="ProteomicsDB" id="232423">
    <molecule id="Q9SEU8-1"/>
</dbReference>
<dbReference type="EnsemblPlants" id="AT4G03520.1">
    <molecule id="Q9SEU8-1"/>
    <property type="protein sequence ID" value="AT4G03520.1"/>
    <property type="gene ID" value="AT4G03520"/>
</dbReference>
<dbReference type="GeneID" id="825653"/>
<dbReference type="Gramene" id="AT4G03520.1">
    <molecule id="Q9SEU8-1"/>
    <property type="protein sequence ID" value="AT4G03520.1"/>
    <property type="gene ID" value="AT4G03520"/>
</dbReference>
<dbReference type="KEGG" id="ath:AT4G03520"/>
<dbReference type="Araport" id="AT4G03520"/>
<dbReference type="TAIR" id="AT4G03520">
    <property type="gene designation" value="ATHM2"/>
</dbReference>
<dbReference type="eggNOG" id="KOG0910">
    <property type="taxonomic scope" value="Eukaryota"/>
</dbReference>
<dbReference type="HOGENOM" id="CLU_090389_0_2_1"/>
<dbReference type="InParanoid" id="Q9SEU8"/>
<dbReference type="OrthoDB" id="2121326at2759"/>
<dbReference type="PhylomeDB" id="Q9SEU8"/>
<dbReference type="PRO" id="PR:Q9SEU8"/>
<dbReference type="Proteomes" id="UP000006548">
    <property type="component" value="Chromosome 4"/>
</dbReference>
<dbReference type="ExpressionAtlas" id="Q9SEU8">
    <property type="expression patterns" value="baseline and differential"/>
</dbReference>
<dbReference type="GO" id="GO:0009507">
    <property type="term" value="C:chloroplast"/>
    <property type="evidence" value="ECO:0007005"/>
    <property type="project" value="TAIR"/>
</dbReference>
<dbReference type="GO" id="GO:0009570">
    <property type="term" value="C:chloroplast stroma"/>
    <property type="evidence" value="ECO:0007005"/>
    <property type="project" value="TAIR"/>
</dbReference>
<dbReference type="GO" id="GO:0009535">
    <property type="term" value="C:chloroplast thylakoid membrane"/>
    <property type="evidence" value="ECO:0007005"/>
    <property type="project" value="TAIR"/>
</dbReference>
<dbReference type="GO" id="GO:0005829">
    <property type="term" value="C:cytosol"/>
    <property type="evidence" value="ECO:0000314"/>
    <property type="project" value="TAIR"/>
</dbReference>
<dbReference type="GO" id="GO:0009579">
    <property type="term" value="C:thylakoid"/>
    <property type="evidence" value="ECO:0007005"/>
    <property type="project" value="TAIR"/>
</dbReference>
<dbReference type="GO" id="GO:0008047">
    <property type="term" value="F:enzyme activator activity"/>
    <property type="evidence" value="ECO:0000314"/>
    <property type="project" value="TAIR"/>
</dbReference>
<dbReference type="GO" id="GO:0015035">
    <property type="term" value="F:protein-disulfide reductase activity"/>
    <property type="evidence" value="ECO:0007669"/>
    <property type="project" value="InterPro"/>
</dbReference>
<dbReference type="GO" id="GO:0043085">
    <property type="term" value="P:positive regulation of catalytic activity"/>
    <property type="evidence" value="ECO:0000314"/>
    <property type="project" value="TAIR"/>
</dbReference>
<dbReference type="CDD" id="cd02947">
    <property type="entry name" value="TRX_family"/>
    <property type="match status" value="1"/>
</dbReference>
<dbReference type="FunFam" id="3.40.30.10:FF:000001">
    <property type="entry name" value="Thioredoxin"/>
    <property type="match status" value="1"/>
</dbReference>
<dbReference type="Gene3D" id="3.40.30.10">
    <property type="entry name" value="Glutaredoxin"/>
    <property type="match status" value="1"/>
</dbReference>
<dbReference type="InterPro" id="IPR005746">
    <property type="entry name" value="Thioredoxin"/>
</dbReference>
<dbReference type="InterPro" id="IPR036249">
    <property type="entry name" value="Thioredoxin-like_sf"/>
</dbReference>
<dbReference type="InterPro" id="IPR017937">
    <property type="entry name" value="Thioredoxin_CS"/>
</dbReference>
<dbReference type="InterPro" id="IPR013766">
    <property type="entry name" value="Thioredoxin_domain"/>
</dbReference>
<dbReference type="NCBIfam" id="TIGR01068">
    <property type="entry name" value="thioredoxin"/>
    <property type="match status" value="1"/>
</dbReference>
<dbReference type="PANTHER" id="PTHR45663">
    <property type="entry name" value="GEO12009P1"/>
    <property type="match status" value="1"/>
</dbReference>
<dbReference type="PANTHER" id="PTHR45663:SF11">
    <property type="entry name" value="GEO12009P1"/>
    <property type="match status" value="1"/>
</dbReference>
<dbReference type="Pfam" id="PF00085">
    <property type="entry name" value="Thioredoxin"/>
    <property type="match status" value="1"/>
</dbReference>
<dbReference type="PRINTS" id="PR00421">
    <property type="entry name" value="THIOREDOXIN"/>
</dbReference>
<dbReference type="SUPFAM" id="SSF52833">
    <property type="entry name" value="Thioredoxin-like"/>
    <property type="match status" value="1"/>
</dbReference>
<dbReference type="PROSITE" id="PS00194">
    <property type="entry name" value="THIOREDOXIN_1"/>
    <property type="match status" value="1"/>
</dbReference>
<dbReference type="PROSITE" id="PS51352">
    <property type="entry name" value="THIOREDOXIN_2"/>
    <property type="match status" value="1"/>
</dbReference>
<reference key="1">
    <citation type="journal article" date="1999" name="Gene">
        <title>The Arabidopsis thaliana genome encodes at least four thioredoxins m and a new prokaryotic-like thioredoxin.</title>
        <authorList>
            <person name="Mestres-Ortega D."/>
            <person name="Meyer Y."/>
        </authorList>
    </citation>
    <scope>NUCLEOTIDE SEQUENCE [MRNA]</scope>
</reference>
<reference key="2">
    <citation type="journal article" date="1999" name="Nature">
        <title>Sequence and analysis of chromosome 4 of the plant Arabidopsis thaliana.</title>
        <authorList>
            <person name="Mayer K.F.X."/>
            <person name="Schueller C."/>
            <person name="Wambutt R."/>
            <person name="Murphy G."/>
            <person name="Volckaert G."/>
            <person name="Pohl T."/>
            <person name="Duesterhoeft A."/>
            <person name="Stiekema W."/>
            <person name="Entian K.-D."/>
            <person name="Terryn N."/>
            <person name="Harris B."/>
            <person name="Ansorge W."/>
            <person name="Brandt P."/>
            <person name="Grivell L.A."/>
            <person name="Rieger M."/>
            <person name="Weichselgartner M."/>
            <person name="de Simone V."/>
            <person name="Obermaier B."/>
            <person name="Mache R."/>
            <person name="Mueller M."/>
            <person name="Kreis M."/>
            <person name="Delseny M."/>
            <person name="Puigdomenech P."/>
            <person name="Watson M."/>
            <person name="Schmidtheini T."/>
            <person name="Reichert B."/>
            <person name="Portetelle D."/>
            <person name="Perez-Alonso M."/>
            <person name="Boutry M."/>
            <person name="Bancroft I."/>
            <person name="Vos P."/>
            <person name="Hoheisel J."/>
            <person name="Zimmermann W."/>
            <person name="Wedler H."/>
            <person name="Ridley P."/>
            <person name="Langham S.-A."/>
            <person name="McCullagh B."/>
            <person name="Bilham L."/>
            <person name="Robben J."/>
            <person name="van der Schueren J."/>
            <person name="Grymonprez B."/>
            <person name="Chuang Y.-J."/>
            <person name="Vandenbussche F."/>
            <person name="Braeken M."/>
            <person name="Weltjens I."/>
            <person name="Voet M."/>
            <person name="Bastiaens I."/>
            <person name="Aert R."/>
            <person name="Defoor E."/>
            <person name="Weitzenegger T."/>
            <person name="Bothe G."/>
            <person name="Ramsperger U."/>
            <person name="Hilbert H."/>
            <person name="Braun M."/>
            <person name="Holzer E."/>
            <person name="Brandt A."/>
            <person name="Peters S."/>
            <person name="van Staveren M."/>
            <person name="Dirkse W."/>
            <person name="Mooijman P."/>
            <person name="Klein Lankhorst R."/>
            <person name="Rose M."/>
            <person name="Hauf J."/>
            <person name="Koetter P."/>
            <person name="Berneiser S."/>
            <person name="Hempel S."/>
            <person name="Feldpausch M."/>
            <person name="Lamberth S."/>
            <person name="Van den Daele H."/>
            <person name="De Keyser A."/>
            <person name="Buysshaert C."/>
            <person name="Gielen J."/>
            <person name="Villarroel R."/>
            <person name="De Clercq R."/>
            <person name="van Montagu M."/>
            <person name="Rogers J."/>
            <person name="Cronin A."/>
            <person name="Quail M.A."/>
            <person name="Bray-Allen S."/>
            <person name="Clark L."/>
            <person name="Doggett J."/>
            <person name="Hall S."/>
            <person name="Kay M."/>
            <person name="Lennard N."/>
            <person name="McLay K."/>
            <person name="Mayes R."/>
            <person name="Pettett A."/>
            <person name="Rajandream M.A."/>
            <person name="Lyne M."/>
            <person name="Benes V."/>
            <person name="Rechmann S."/>
            <person name="Borkova D."/>
            <person name="Bloecker H."/>
            <person name="Scharfe M."/>
            <person name="Grimm M."/>
            <person name="Loehnert T.-H."/>
            <person name="Dose S."/>
            <person name="de Haan M."/>
            <person name="Maarse A.C."/>
            <person name="Schaefer M."/>
            <person name="Mueller-Auer S."/>
            <person name="Gabel C."/>
            <person name="Fuchs M."/>
            <person name="Fartmann B."/>
            <person name="Granderath K."/>
            <person name="Dauner D."/>
            <person name="Herzl A."/>
            <person name="Neumann S."/>
            <person name="Argiriou A."/>
            <person name="Vitale D."/>
            <person name="Liguori R."/>
            <person name="Piravandi E."/>
            <person name="Massenet O."/>
            <person name="Quigley F."/>
            <person name="Clabauld G."/>
            <person name="Muendlein A."/>
            <person name="Felber R."/>
            <person name="Schnabl S."/>
            <person name="Hiller R."/>
            <person name="Schmidt W."/>
            <person name="Lecharny A."/>
            <person name="Aubourg S."/>
            <person name="Chefdor F."/>
            <person name="Cooke R."/>
            <person name="Berger C."/>
            <person name="Monfort A."/>
            <person name="Casacuberta E."/>
            <person name="Gibbons T."/>
            <person name="Weber N."/>
            <person name="Vandenbol M."/>
            <person name="Bargues M."/>
            <person name="Terol J."/>
            <person name="Torres A."/>
            <person name="Perez-Perez A."/>
            <person name="Purnelle B."/>
            <person name="Bent E."/>
            <person name="Johnson S."/>
            <person name="Tacon D."/>
            <person name="Jesse T."/>
            <person name="Heijnen L."/>
            <person name="Schwarz S."/>
            <person name="Scholler P."/>
            <person name="Heber S."/>
            <person name="Francs P."/>
            <person name="Bielke C."/>
            <person name="Frishman D."/>
            <person name="Haase D."/>
            <person name="Lemcke K."/>
            <person name="Mewes H.-W."/>
            <person name="Stocker S."/>
            <person name="Zaccaria P."/>
            <person name="Bevan M."/>
            <person name="Wilson R.K."/>
            <person name="de la Bastide M."/>
            <person name="Habermann K."/>
            <person name="Parnell L."/>
            <person name="Dedhia N."/>
            <person name="Gnoj L."/>
            <person name="Schutz K."/>
            <person name="Huang E."/>
            <person name="Spiegel L."/>
            <person name="Sekhon M."/>
            <person name="Murray J."/>
            <person name="Sheet P."/>
            <person name="Cordes M."/>
            <person name="Abu-Threideh J."/>
            <person name="Stoneking T."/>
            <person name="Kalicki J."/>
            <person name="Graves T."/>
            <person name="Harmon G."/>
            <person name="Edwards J."/>
            <person name="Latreille P."/>
            <person name="Courtney L."/>
            <person name="Cloud J."/>
            <person name="Abbott A."/>
            <person name="Scott K."/>
            <person name="Johnson D."/>
            <person name="Minx P."/>
            <person name="Bentley D."/>
            <person name="Fulton B."/>
            <person name="Miller N."/>
            <person name="Greco T."/>
            <person name="Kemp K."/>
            <person name="Kramer J."/>
            <person name="Fulton L."/>
            <person name="Mardis E."/>
            <person name="Dante M."/>
            <person name="Pepin K."/>
            <person name="Hillier L.W."/>
            <person name="Nelson J."/>
            <person name="Spieth J."/>
            <person name="Ryan E."/>
            <person name="Andrews S."/>
            <person name="Geisel C."/>
            <person name="Layman D."/>
            <person name="Du H."/>
            <person name="Ali J."/>
            <person name="Berghoff A."/>
            <person name="Jones K."/>
            <person name="Drone K."/>
            <person name="Cotton M."/>
            <person name="Joshu C."/>
            <person name="Antonoiu B."/>
            <person name="Zidanic M."/>
            <person name="Strong C."/>
            <person name="Sun H."/>
            <person name="Lamar B."/>
            <person name="Yordan C."/>
            <person name="Ma P."/>
            <person name="Zhong J."/>
            <person name="Preston R."/>
            <person name="Vil D."/>
            <person name="Shekher M."/>
            <person name="Matero A."/>
            <person name="Shah R."/>
            <person name="Swaby I.K."/>
            <person name="O'Shaughnessy A."/>
            <person name="Rodriguez M."/>
            <person name="Hoffman J."/>
            <person name="Till S."/>
            <person name="Granat S."/>
            <person name="Shohdy N."/>
            <person name="Hasegawa A."/>
            <person name="Hameed A."/>
            <person name="Lodhi M."/>
            <person name="Johnson A."/>
            <person name="Chen E."/>
            <person name="Marra M.A."/>
            <person name="Martienssen R."/>
            <person name="McCombie W.R."/>
        </authorList>
    </citation>
    <scope>NUCLEOTIDE SEQUENCE [LARGE SCALE GENOMIC DNA]</scope>
    <source>
        <strain>cv. Columbia</strain>
    </source>
</reference>
<reference key="3">
    <citation type="journal article" date="2017" name="Plant J.">
        <title>Araport11: a complete reannotation of the Arabidopsis thaliana reference genome.</title>
        <authorList>
            <person name="Cheng C.Y."/>
            <person name="Krishnakumar V."/>
            <person name="Chan A.P."/>
            <person name="Thibaud-Nissen F."/>
            <person name="Schobel S."/>
            <person name="Town C.D."/>
        </authorList>
    </citation>
    <scope>GENOME REANNOTATION</scope>
    <source>
        <strain>cv. Columbia</strain>
    </source>
</reference>
<reference key="4">
    <citation type="journal article" date="2003" name="Science">
        <title>Empirical analysis of transcriptional activity in the Arabidopsis genome.</title>
        <authorList>
            <person name="Yamada K."/>
            <person name="Lim J."/>
            <person name="Dale J.M."/>
            <person name="Chen H."/>
            <person name="Shinn P."/>
            <person name="Palm C.J."/>
            <person name="Southwick A.M."/>
            <person name="Wu H.C."/>
            <person name="Kim C.J."/>
            <person name="Nguyen M."/>
            <person name="Pham P.K."/>
            <person name="Cheuk R.F."/>
            <person name="Karlin-Newmann G."/>
            <person name="Liu S.X."/>
            <person name="Lam B."/>
            <person name="Sakano H."/>
            <person name="Wu T."/>
            <person name="Yu G."/>
            <person name="Miranda M."/>
            <person name="Quach H.L."/>
            <person name="Tripp M."/>
            <person name="Chang C.H."/>
            <person name="Lee J.M."/>
            <person name="Toriumi M.J."/>
            <person name="Chan M.M."/>
            <person name="Tang C.C."/>
            <person name="Onodera C.S."/>
            <person name="Deng J.M."/>
            <person name="Akiyama K."/>
            <person name="Ansari Y."/>
            <person name="Arakawa T."/>
            <person name="Banh J."/>
            <person name="Banno F."/>
            <person name="Bowser L."/>
            <person name="Brooks S.Y."/>
            <person name="Carninci P."/>
            <person name="Chao Q."/>
            <person name="Choy N."/>
            <person name="Enju A."/>
            <person name="Goldsmith A.D."/>
            <person name="Gurjal M."/>
            <person name="Hansen N.F."/>
            <person name="Hayashizaki Y."/>
            <person name="Johnson-Hopson C."/>
            <person name="Hsuan V.W."/>
            <person name="Iida K."/>
            <person name="Karnes M."/>
            <person name="Khan S."/>
            <person name="Koesema E."/>
            <person name="Ishida J."/>
            <person name="Jiang P.X."/>
            <person name="Jones T."/>
            <person name="Kawai J."/>
            <person name="Kamiya A."/>
            <person name="Meyers C."/>
            <person name="Nakajima M."/>
            <person name="Narusaka M."/>
            <person name="Seki M."/>
            <person name="Sakurai T."/>
            <person name="Satou M."/>
            <person name="Tamse R."/>
            <person name="Vaysberg M."/>
            <person name="Wallender E.K."/>
            <person name="Wong C."/>
            <person name="Yamamura Y."/>
            <person name="Yuan S."/>
            <person name="Shinozaki K."/>
            <person name="Davis R.W."/>
            <person name="Theologis A."/>
            <person name="Ecker J.R."/>
        </authorList>
    </citation>
    <scope>NUCLEOTIDE SEQUENCE [LARGE SCALE MRNA]</scope>
    <source>
        <strain>cv. Columbia</strain>
    </source>
</reference>
<reference key="5">
    <citation type="submission" date="2005-03" db="EMBL/GenBank/DDBJ databases">
        <title>Large-scale analysis of RIKEN Arabidopsis full-length (RAFL) cDNAs.</title>
        <authorList>
            <person name="Totoki Y."/>
            <person name="Seki M."/>
            <person name="Ishida J."/>
            <person name="Nakajima M."/>
            <person name="Enju A."/>
            <person name="Kamiya A."/>
            <person name="Narusaka M."/>
            <person name="Shin-i T."/>
            <person name="Nakagawa M."/>
            <person name="Sakamoto N."/>
            <person name="Oishi K."/>
            <person name="Kohara Y."/>
            <person name="Kobayashi M."/>
            <person name="Toyoda A."/>
            <person name="Sakaki Y."/>
            <person name="Sakurai T."/>
            <person name="Iida K."/>
            <person name="Akiyama K."/>
            <person name="Satou M."/>
            <person name="Toyoda T."/>
            <person name="Konagaya A."/>
            <person name="Carninci P."/>
            <person name="Kawai J."/>
            <person name="Hayashizaki Y."/>
            <person name="Shinozaki K."/>
        </authorList>
    </citation>
    <scope>NUCLEOTIDE SEQUENCE [LARGE SCALE MRNA]</scope>
    <source>
        <strain>cv. Columbia</strain>
    </source>
</reference>
<reference key="6">
    <citation type="submission" date="2002-03" db="EMBL/GenBank/DDBJ databases">
        <title>Full-length cDNA from Arabidopsis thaliana.</title>
        <authorList>
            <person name="Brover V.V."/>
            <person name="Troukhan M.E."/>
            <person name="Alexandrov N.A."/>
            <person name="Lu Y.-P."/>
            <person name="Flavell R.B."/>
            <person name="Feldmann K.A."/>
        </authorList>
    </citation>
    <scope>NUCLEOTIDE SEQUENCE [LARGE SCALE MRNA]</scope>
</reference>
<reference key="7">
    <citation type="journal article" date="2009" name="Mol. Plant">
        <title>Comparative genomic study of the thioredoxin family in photosynthetic organisms with emphasis on Populus trichocarpa.</title>
        <authorList>
            <person name="Chibani K."/>
            <person name="Wingsle G."/>
            <person name="Jacquot J.P."/>
            <person name="Gelhaye E."/>
            <person name="Rouhier N."/>
        </authorList>
    </citation>
    <scope>GENE FAMILY</scope>
    <scope>NOMENCLATURE</scope>
</reference>
<reference key="8">
    <citation type="journal article" date="2009" name="Plant Mol. Biol.">
        <title>A novel extended family of stromal thioredoxins.</title>
        <authorList>
            <person name="Cain P."/>
            <person name="Hall M."/>
            <person name="Schroder W.P."/>
            <person name="Kieselbach T."/>
            <person name="Robinson C."/>
        </authorList>
    </citation>
    <scope>SUBCELLULAR LOCATION</scope>
</reference>
<reference key="9">
    <citation type="journal article" date="2011" name="Plant J.">
        <title>Alternative targeting of Arabidopsis plastidic glucose-6-phosphate dehydrogenase G6PD1 involves cysteine-dependent interaction with G6PD4 in the cytosol.</title>
        <authorList>
            <person name="Meyer T."/>
            <person name="Hoelscher C."/>
            <person name="Schwoeppe C."/>
            <person name="von Schaewen A."/>
        </authorList>
    </citation>
    <scope>INTERACTION WITH G6PD1 AND G6PD4</scope>
</reference>
<reference key="10">
    <citation type="journal article" date="2014" name="Mol. Plant">
        <title>Dual-targeting of Arabidopsis 6-phosphogluconolactonase 3 (PGL3) to chloroplasts and peroxisomes involves interaction with Trx m2 in the cytosol.</title>
        <authorList>
            <person name="Hoelscher C."/>
            <person name="Meyer T."/>
            <person name="von Schaewen A."/>
        </authorList>
    </citation>
    <scope>INTERACTION WITH PGL3</scope>
</reference>
<feature type="transit peptide" description="Chloroplast" evidence="2">
    <location>
        <begin position="1"/>
        <end position="72"/>
    </location>
</feature>
<feature type="chain" id="PRO_0000034163" description="Thioredoxin M2, chloroplastic">
    <location>
        <begin position="73"/>
        <end position="186"/>
    </location>
</feature>
<feature type="domain" description="Thioredoxin" evidence="3">
    <location>
        <begin position="73"/>
        <end position="186"/>
    </location>
</feature>
<feature type="active site" description="Nucleophile" evidence="1">
    <location>
        <position position="110"/>
    </location>
</feature>
<feature type="active site" description="Nucleophile" evidence="1">
    <location>
        <position position="113"/>
    </location>
</feature>
<feature type="site" description="Deprotonates C-terminal active site Cys" evidence="1">
    <location>
        <position position="104"/>
    </location>
</feature>
<feature type="site" description="Contributes to redox potential value" evidence="1">
    <location>
        <position position="111"/>
    </location>
</feature>
<feature type="site" description="Contributes to redox potential value" evidence="1">
    <location>
        <position position="112"/>
    </location>
</feature>
<feature type="disulfide bond" description="Redox-active" evidence="3">
    <location>
        <begin position="110"/>
        <end position="113"/>
    </location>
</feature>
<feature type="sequence conflict" description="In Ref. 1; AAF15949." evidence="8" ref="1">
    <original>S</original>
    <variation>F</variation>
    <location>
        <position position="92"/>
    </location>
</feature>
<feature type="turn" evidence="12">
    <location>
        <begin position="87"/>
        <end position="89"/>
    </location>
</feature>
<feature type="helix" evidence="12">
    <location>
        <begin position="90"/>
        <end position="93"/>
    </location>
</feature>
<feature type="turn" evidence="12">
    <location>
        <begin position="94"/>
        <end position="96"/>
    </location>
</feature>
<feature type="strand" evidence="12">
    <location>
        <begin position="101"/>
        <end position="106"/>
    </location>
</feature>
<feature type="helix" evidence="12">
    <location>
        <begin position="111"/>
        <end position="115"/>
    </location>
</feature>
<feature type="helix" evidence="12">
    <location>
        <begin position="117"/>
        <end position="126"/>
    </location>
</feature>
<feature type="turn" evidence="12">
    <location>
        <begin position="127"/>
        <end position="130"/>
    </location>
</feature>
<feature type="strand" evidence="12">
    <location>
        <begin position="131"/>
        <end position="137"/>
    </location>
</feature>
<feature type="turn" evidence="12">
    <location>
        <begin position="138"/>
        <end position="140"/>
    </location>
</feature>
<feature type="helix" evidence="12">
    <location>
        <begin position="143"/>
        <end position="148"/>
    </location>
</feature>
<feature type="strand" evidence="12">
    <location>
        <begin position="152"/>
        <end position="160"/>
    </location>
</feature>
<feature type="strand" evidence="12">
    <location>
        <begin position="163"/>
        <end position="170"/>
    </location>
</feature>
<feature type="helix" evidence="12">
    <location>
        <begin position="174"/>
        <end position="182"/>
    </location>
</feature>
<comment type="function">
    <text>Thiol-disulfide oxidoreductase that may participate in various redox reactions. May activate NADP-malate dehydrogenase.</text>
</comment>
<comment type="subunit">
    <text evidence="5 6">Interacts with G6PD1 and G6PD4 (PubMed:21309870). Interacts with PGL3 (PubMed:24008768).</text>
</comment>
<comment type="interaction">
    <interactant intactId="EBI-4475330">
        <id>Q9SEU8</id>
    </interactant>
    <interactant intactId="EBI-4457873">
        <id>Q9SMX3</id>
        <label>VDAC3</label>
    </interactant>
    <organismsDiffer>false</organismsDiffer>
    <experiments>4</experiments>
</comment>
<comment type="subcellular location">
    <subcellularLocation>
        <location evidence="4">Plastid</location>
        <location evidence="4">Chloroplast stroma</location>
    </subcellularLocation>
</comment>
<comment type="alternative products">
    <event type="alternative splicing"/>
    <isoform>
        <id>Q9SEU8-1</id>
        <name>1</name>
        <sequence type="displayed"/>
    </isoform>
    <text>A number of isoforms are produced. According to EST sequences.</text>
</comment>
<comment type="similarity">
    <text evidence="8">Belongs to the thioredoxin family. Plant M-type subfamily.</text>
</comment>
<keyword id="KW-0002">3D-structure</keyword>
<keyword id="KW-0025">Alternative splicing</keyword>
<keyword id="KW-0150">Chloroplast</keyword>
<keyword id="KW-1015">Disulfide bond</keyword>
<keyword id="KW-0249">Electron transport</keyword>
<keyword id="KW-0934">Plastid</keyword>
<keyword id="KW-0676">Redox-active center</keyword>
<keyword id="KW-1185">Reference proteome</keyword>
<keyword id="KW-0809">Transit peptide</keyword>
<keyword id="KW-0813">Transport</keyword>